<name>RECF_PAEAT</name>
<feature type="chain" id="PRO_1000048501" description="DNA replication and repair protein RecF">
    <location>
        <begin position="1"/>
        <end position="399"/>
    </location>
</feature>
<feature type="binding site" evidence="1">
    <location>
        <begin position="30"/>
        <end position="37"/>
    </location>
    <ligand>
        <name>ATP</name>
        <dbReference type="ChEBI" id="CHEBI:30616"/>
    </ligand>
</feature>
<reference key="1">
    <citation type="journal article" date="2006" name="PLoS Genet.">
        <title>Secrets of soil survival revealed by the genome sequence of Arthrobacter aurescens TC1.</title>
        <authorList>
            <person name="Mongodin E.F."/>
            <person name="Shapir N."/>
            <person name="Daugherty S.C."/>
            <person name="DeBoy R.T."/>
            <person name="Emerson J.B."/>
            <person name="Shvartzbeyn A."/>
            <person name="Radune D."/>
            <person name="Vamathevan J."/>
            <person name="Riggs F."/>
            <person name="Grinberg V."/>
            <person name="Khouri H.M."/>
            <person name="Wackett L.P."/>
            <person name="Nelson K.E."/>
            <person name="Sadowsky M.J."/>
        </authorList>
    </citation>
    <scope>NUCLEOTIDE SEQUENCE [LARGE SCALE GENOMIC DNA]</scope>
    <source>
        <strain>TC1</strain>
    </source>
</reference>
<gene>
    <name evidence="1" type="primary">recF</name>
    <name type="ordered locus">AAur_0004</name>
</gene>
<protein>
    <recommendedName>
        <fullName evidence="1">DNA replication and repair protein RecF</fullName>
    </recommendedName>
</protein>
<sequence length="399" mass="43488">MYLEHLSLTDFRSYAQVDLKLGPGVTVLVGSNGIGKTNLMEAIGYLATLSSHRVSTDAPLLRFGTERALIRAKLVRGEQSTVIELEINAGRANRGRINRSNPVRARDILGICQTVLFAPEDLALVKGDPSNRRRFLDELLVSLVPRHAATRSDYDRVLKQRNALLKSARTGKFTAGHEATLDVWDQHMARAGAELLHARLELVERLRPHLNSAYAQLTDASKDAGAVYRSTIQGVLDDDGGPTDHGTEPSPSVDDLRLLSVDELTERYVQAFAASRKKELERGISLVGPHRDELELVLGQAPAKGYASHGETWSMCLSLRLASYYVMLDDARTGGTAPILILILDDVFAELDVHRRRKLAAIVAGAEQVLVTAAVDADIPEELAGRRVTVVPGGIDGEG</sequence>
<keyword id="KW-0067">ATP-binding</keyword>
<keyword id="KW-0963">Cytoplasm</keyword>
<keyword id="KW-0227">DNA damage</keyword>
<keyword id="KW-0234">DNA repair</keyword>
<keyword id="KW-0235">DNA replication</keyword>
<keyword id="KW-0238">DNA-binding</keyword>
<keyword id="KW-0547">Nucleotide-binding</keyword>
<keyword id="KW-0742">SOS response</keyword>
<proteinExistence type="inferred from homology"/>
<comment type="function">
    <text evidence="1">The RecF protein is involved in DNA metabolism; it is required for DNA replication and normal SOS inducibility. RecF binds preferentially to single-stranded, linear DNA. It also seems to bind ATP.</text>
</comment>
<comment type="subcellular location">
    <subcellularLocation>
        <location evidence="1">Cytoplasm</location>
    </subcellularLocation>
</comment>
<comment type="similarity">
    <text evidence="1">Belongs to the RecF family.</text>
</comment>
<evidence type="ECO:0000255" key="1">
    <source>
        <dbReference type="HAMAP-Rule" id="MF_00365"/>
    </source>
</evidence>
<accession>A1R0S5</accession>
<dbReference type="EMBL" id="CP000474">
    <property type="protein sequence ID" value="ABM07246.1"/>
    <property type="molecule type" value="Genomic_DNA"/>
</dbReference>
<dbReference type="RefSeq" id="WP_011772785.1">
    <property type="nucleotide sequence ID" value="NC_008711.1"/>
</dbReference>
<dbReference type="SMR" id="A1R0S5"/>
<dbReference type="STRING" id="290340.AAur_0004"/>
<dbReference type="KEGG" id="aau:AAur_0004"/>
<dbReference type="eggNOG" id="COG1195">
    <property type="taxonomic scope" value="Bacteria"/>
</dbReference>
<dbReference type="HOGENOM" id="CLU_040267_1_1_11"/>
<dbReference type="OrthoDB" id="9803889at2"/>
<dbReference type="Proteomes" id="UP000000637">
    <property type="component" value="Chromosome"/>
</dbReference>
<dbReference type="GO" id="GO:0005737">
    <property type="term" value="C:cytoplasm"/>
    <property type="evidence" value="ECO:0007669"/>
    <property type="project" value="UniProtKB-SubCell"/>
</dbReference>
<dbReference type="GO" id="GO:0005524">
    <property type="term" value="F:ATP binding"/>
    <property type="evidence" value="ECO:0007669"/>
    <property type="project" value="UniProtKB-UniRule"/>
</dbReference>
<dbReference type="GO" id="GO:0016887">
    <property type="term" value="F:ATP hydrolysis activity"/>
    <property type="evidence" value="ECO:0007669"/>
    <property type="project" value="InterPro"/>
</dbReference>
<dbReference type="GO" id="GO:0003697">
    <property type="term" value="F:single-stranded DNA binding"/>
    <property type="evidence" value="ECO:0007669"/>
    <property type="project" value="UniProtKB-UniRule"/>
</dbReference>
<dbReference type="GO" id="GO:0006260">
    <property type="term" value="P:DNA replication"/>
    <property type="evidence" value="ECO:0007669"/>
    <property type="project" value="UniProtKB-UniRule"/>
</dbReference>
<dbReference type="GO" id="GO:0000731">
    <property type="term" value="P:DNA synthesis involved in DNA repair"/>
    <property type="evidence" value="ECO:0007669"/>
    <property type="project" value="TreeGrafter"/>
</dbReference>
<dbReference type="GO" id="GO:0006302">
    <property type="term" value="P:double-strand break repair"/>
    <property type="evidence" value="ECO:0007669"/>
    <property type="project" value="TreeGrafter"/>
</dbReference>
<dbReference type="GO" id="GO:0009432">
    <property type="term" value="P:SOS response"/>
    <property type="evidence" value="ECO:0007669"/>
    <property type="project" value="UniProtKB-UniRule"/>
</dbReference>
<dbReference type="Gene3D" id="3.40.50.300">
    <property type="entry name" value="P-loop containing nucleotide triphosphate hydrolases"/>
    <property type="match status" value="1"/>
</dbReference>
<dbReference type="Gene3D" id="1.20.1050.90">
    <property type="entry name" value="RecF/RecN/SMC, N-terminal domain"/>
    <property type="match status" value="1"/>
</dbReference>
<dbReference type="HAMAP" id="MF_00365">
    <property type="entry name" value="RecF"/>
    <property type="match status" value="1"/>
</dbReference>
<dbReference type="InterPro" id="IPR003593">
    <property type="entry name" value="AAA+_ATPase"/>
</dbReference>
<dbReference type="InterPro" id="IPR001238">
    <property type="entry name" value="DNA-binding_RecF"/>
</dbReference>
<dbReference type="InterPro" id="IPR018078">
    <property type="entry name" value="DNA-binding_RecF_CS"/>
</dbReference>
<dbReference type="InterPro" id="IPR027417">
    <property type="entry name" value="P-loop_NTPase"/>
</dbReference>
<dbReference type="InterPro" id="IPR003395">
    <property type="entry name" value="RecF/RecN/SMC_N"/>
</dbReference>
<dbReference type="InterPro" id="IPR042174">
    <property type="entry name" value="RecF_2"/>
</dbReference>
<dbReference type="NCBIfam" id="TIGR00611">
    <property type="entry name" value="recf"/>
    <property type="match status" value="1"/>
</dbReference>
<dbReference type="PANTHER" id="PTHR32182">
    <property type="entry name" value="DNA REPLICATION AND REPAIR PROTEIN RECF"/>
    <property type="match status" value="1"/>
</dbReference>
<dbReference type="PANTHER" id="PTHR32182:SF0">
    <property type="entry name" value="DNA REPLICATION AND REPAIR PROTEIN RECF"/>
    <property type="match status" value="1"/>
</dbReference>
<dbReference type="Pfam" id="PF02463">
    <property type="entry name" value="SMC_N"/>
    <property type="match status" value="1"/>
</dbReference>
<dbReference type="SMART" id="SM00382">
    <property type="entry name" value="AAA"/>
    <property type="match status" value="1"/>
</dbReference>
<dbReference type="SUPFAM" id="SSF52540">
    <property type="entry name" value="P-loop containing nucleoside triphosphate hydrolases"/>
    <property type="match status" value="1"/>
</dbReference>
<dbReference type="PROSITE" id="PS00617">
    <property type="entry name" value="RECF_1"/>
    <property type="match status" value="1"/>
</dbReference>
<dbReference type="PROSITE" id="PS00618">
    <property type="entry name" value="RECF_2"/>
    <property type="match status" value="1"/>
</dbReference>
<organism>
    <name type="scientific">Paenarthrobacter aurescens (strain TC1)</name>
    <dbReference type="NCBI Taxonomy" id="290340"/>
    <lineage>
        <taxon>Bacteria</taxon>
        <taxon>Bacillati</taxon>
        <taxon>Actinomycetota</taxon>
        <taxon>Actinomycetes</taxon>
        <taxon>Micrococcales</taxon>
        <taxon>Micrococcaceae</taxon>
        <taxon>Paenarthrobacter</taxon>
    </lineage>
</organism>